<protein>
    <recommendedName>
        <fullName>Junction plakoglobin</fullName>
    </recommendedName>
    <alternativeName>
        <fullName>Catenin gamma</fullName>
    </alternativeName>
    <alternativeName>
        <fullName>Desmoplakin III</fullName>
    </alternativeName>
    <alternativeName>
        <fullName>Desmoplakin-3</fullName>
    </alternativeName>
</protein>
<gene>
    <name evidence="27" type="primary">JUP</name>
    <name evidence="27" type="synonym">CTNNG</name>
    <name evidence="27" type="synonym">DP3</name>
</gene>
<sequence>MEVMNLMEQPIKVTEWQQTYTYDSGIHSGANTCVPSVSSKGIMEEDEACGRQYTLKKTTTYTQGVPPSQGDLEYQMSTTARAKRVREAMCPGVSGEDSSLLLATQVEGQATNLQRLAEPSQLLKSAIVHLINYQDDAELATRALPELTKLLNDEDPVVVTKAAMIVNQLSKKEASRRALMGSPQLVAAVVRTMQNTSDLDTARCTTSILHNLSHHREGLLAIFKSGGIPALVRMLSSPVESVLFYAITTLHNLLLYQEGAKMAVRLADGLQKMVPLLNKNNPKFLAITTDCLQLLAYGNQESKLIILANGGPQALVQIMRNYSYEKLLWTTSRVLKVLSVCPSNKPAIVEAGGMQALGKHLTSNSPRLVQNCLWTLRNLSDVATKQEGLESVLKILVNQLSVDDVNVLTCATGTLSNLTCNNSKNKTLVTQNSGVEALIHAILRAGDKDDITEPAVCALRHLTSRHPEAEMAQNSVRLNYGIPAIVKLLNQPNQWPLVKATIGLIRNLALCPANHAPLQEAAVIPRLVQLLVKAHQDAQRHVAAGTQQPYTDGVRMEEIVEGCTGALHILARDPMNRMEIFRLNTIPLFVQLLYSSVENIQRVAAGVLCELAQDKEAADAIDAEGASAPLMELLHSRNEGTATYAAAVLFRISEDKNPDYRKRVSVELTNSLFKHDPAAWEAAQSMIPINEPYGDDMDATYRPMYSSDVPLDPLEMHMDMDGDYPIDTYSDGLRPPYPTADHMLA</sequence>
<name>PLAK_HUMAN</name>
<organism>
    <name type="scientific">Homo sapiens</name>
    <name type="common">Human</name>
    <dbReference type="NCBI Taxonomy" id="9606"/>
    <lineage>
        <taxon>Eukaryota</taxon>
        <taxon>Metazoa</taxon>
        <taxon>Chordata</taxon>
        <taxon>Craniata</taxon>
        <taxon>Vertebrata</taxon>
        <taxon>Euteleostomi</taxon>
        <taxon>Mammalia</taxon>
        <taxon>Eutheria</taxon>
        <taxon>Euarchontoglires</taxon>
        <taxon>Primates</taxon>
        <taxon>Haplorrhini</taxon>
        <taxon>Catarrhini</taxon>
        <taxon>Hominidae</taxon>
        <taxon>Homo</taxon>
    </lineage>
</organism>
<feature type="chain" id="PRO_0000064278" description="Junction plakoglobin">
    <location>
        <begin position="1"/>
        <end position="745"/>
    </location>
</feature>
<feature type="repeat" description="ARM 1">
    <location>
        <begin position="132"/>
        <end position="171"/>
    </location>
</feature>
<feature type="repeat" description="ARM 2">
    <location>
        <begin position="172"/>
        <end position="215"/>
    </location>
</feature>
<feature type="repeat" description="ARM 3">
    <location>
        <begin position="216"/>
        <end position="255"/>
    </location>
</feature>
<feature type="repeat" description="ARM 4">
    <location>
        <begin position="258"/>
        <end position="297"/>
    </location>
</feature>
<feature type="repeat" description="ARM 5">
    <location>
        <begin position="298"/>
        <end position="341"/>
    </location>
</feature>
<feature type="repeat" description="ARM 6">
    <location>
        <begin position="342"/>
        <end position="381"/>
    </location>
</feature>
<feature type="repeat" description="ARM 7">
    <location>
        <begin position="383"/>
        <end position="420"/>
    </location>
</feature>
<feature type="repeat" description="ARM 8">
    <location>
        <begin position="423"/>
        <end position="464"/>
    </location>
</feature>
<feature type="repeat" description="ARM 9">
    <location>
        <begin position="470"/>
        <end position="510"/>
    </location>
</feature>
<feature type="repeat" description="ARM 10">
    <location>
        <begin position="512"/>
        <end position="551"/>
    </location>
</feature>
<feature type="repeat" description="ARM 11">
    <location>
        <begin position="574"/>
        <end position="613"/>
    </location>
</feature>
<feature type="repeat" description="ARM 12">
    <location>
        <begin position="615"/>
        <end position="661"/>
    </location>
</feature>
<feature type="region of interest" description="Interaction with DSC1 and DSG1">
    <location>
        <begin position="132"/>
        <end position="297"/>
    </location>
</feature>
<feature type="region of interest" description="Interaction with DSC1">
    <location>
        <begin position="574"/>
        <end position="661"/>
    </location>
</feature>
<feature type="modified residue" description="N-acetylmethionine" evidence="25 30">
    <location>
        <position position="1"/>
    </location>
</feature>
<feature type="modified residue" description="Phosphoserine" evidence="31">
    <location>
        <position position="99"/>
    </location>
</feature>
<feature type="modified residue" description="Phosphoserine" evidence="31">
    <location>
        <position position="125"/>
    </location>
</feature>
<feature type="modified residue" description="Phosphoserine" evidence="28 31">
    <location>
        <position position="182"/>
    </location>
</feature>
<feature type="modified residue" description="Phosphoserine" evidence="28 29">
    <location>
        <position position="665"/>
    </location>
</feature>
<feature type="modified residue" description="Phosphoserine" evidence="31">
    <location>
        <position position="730"/>
    </location>
</feature>
<feature type="glycosylation site" description="O-linked (GlcNAc) threonine" evidence="6">
    <location>
        <position position="14"/>
    </location>
</feature>
<feature type="sequence variant" id="VAR_065698" description="In ARVD12; uncertain significance; dbSNP:rs570878629." evidence="12">
    <original>T</original>
    <variation>I</variation>
    <location>
        <position position="19"/>
    </location>
</feature>
<feature type="sequence variant" id="VAR_037803" description="In ARVD12; affects the structure and distribution of mechanical and electrical cell junctions." evidence="9">
    <original>S</original>
    <variation>SS</variation>
    <location>
        <position position="39"/>
    </location>
</feature>
<feature type="sequence variant" id="VAR_065699" description="In dbSNP:rs41283425." evidence="11 12">
    <original>R</original>
    <variation>H</variation>
    <location>
        <position position="142"/>
    </location>
</feature>
<feature type="sequence variant" id="VAR_065700" description="In dbSNP:rs143043662." evidence="12">
    <original>V</original>
    <variation>I</variation>
    <location>
        <position position="648"/>
    </location>
</feature>
<feature type="sequence variant" id="VAR_037804" description="In dbSNP:rs1126821." evidence="3 8 11 12 23 24">
    <original>M</original>
    <variation>L</variation>
    <location>
        <position position="697"/>
    </location>
</feature>
<feature type="mutagenesis site" description="Abolishes glycosylation. Does not affect binding to CDH1, DSC1 or DSG1." evidence="6">
    <original>T</original>
    <variation>A</variation>
    <location>
        <position position="14"/>
    </location>
</feature>
<feature type="mutagenesis site" description="Reduces glycosylation." evidence="6">
    <original>T</original>
    <variation>A</variation>
    <location>
        <position position="19"/>
    </location>
</feature>
<feature type="mutagenesis site" description="Does not affect glycosylation." evidence="6">
    <original>T</original>
    <variation>A</variation>
    <location>
        <position position="21"/>
    </location>
</feature>
<feature type="mutagenesis site" description="Does not affect glycosylation." evidence="6">
    <original>S</original>
    <variation>A</variation>
    <location>
        <position position="24"/>
    </location>
</feature>
<feature type="mutagenesis site" description="Does not affect glycosylation." evidence="6">
    <original>S</original>
    <variation>A</variation>
    <location>
        <position position="28"/>
    </location>
</feature>
<feature type="mutagenesis site" description="Does not affect glycosylation." evidence="6">
    <original>T</original>
    <variation>A</variation>
    <location>
        <position position="32"/>
    </location>
</feature>
<feature type="sequence conflict" description="In Ref. 4; AAO85780." evidence="26" ref="4">
    <original>P</original>
    <variation>S</variation>
    <location>
        <position position="91"/>
    </location>
</feature>
<feature type="sequence conflict" description="In Ref. 1; AAA64895." evidence="26" ref="1">
    <original>VRLADGL</original>
    <variation>CAGRRA</variation>
    <location>
        <begin position="264"/>
        <end position="270"/>
    </location>
</feature>
<feature type="helix" evidence="32">
    <location>
        <begin position="127"/>
        <end position="131"/>
    </location>
</feature>
<feature type="helix" evidence="32">
    <location>
        <begin position="133"/>
        <end position="142"/>
    </location>
</feature>
<feature type="helix" evidence="32">
    <location>
        <begin position="144"/>
        <end position="151"/>
    </location>
</feature>
<feature type="helix" evidence="32">
    <location>
        <begin position="156"/>
        <end position="169"/>
    </location>
</feature>
<feature type="helix" evidence="32">
    <location>
        <begin position="173"/>
        <end position="180"/>
    </location>
</feature>
<feature type="helix" evidence="32">
    <location>
        <begin position="183"/>
        <end position="193"/>
    </location>
</feature>
<feature type="helix" evidence="32">
    <location>
        <begin position="199"/>
        <end position="212"/>
    </location>
</feature>
<feature type="helix" evidence="32">
    <location>
        <begin position="216"/>
        <end position="224"/>
    </location>
</feature>
<feature type="helix" evidence="32">
    <location>
        <begin position="227"/>
        <end position="233"/>
    </location>
</feature>
<feature type="helix" evidence="32">
    <location>
        <begin position="234"/>
        <end position="236"/>
    </location>
</feature>
<feature type="helix" evidence="32">
    <location>
        <begin position="240"/>
        <end position="256"/>
    </location>
</feature>
<feature type="helix" evidence="32">
    <location>
        <begin position="260"/>
        <end position="266"/>
    </location>
</feature>
<feature type="helix" evidence="32">
    <location>
        <begin position="269"/>
        <end position="272"/>
    </location>
</feature>
<feature type="helix" evidence="32">
    <location>
        <begin position="274"/>
        <end position="278"/>
    </location>
</feature>
<feature type="helix" evidence="32">
    <location>
        <begin position="282"/>
        <end position="296"/>
    </location>
</feature>
<feature type="helix" evidence="32">
    <location>
        <begin position="300"/>
        <end position="308"/>
    </location>
</feature>
<feature type="helix" evidence="32">
    <location>
        <begin position="311"/>
        <end position="321"/>
    </location>
</feature>
<feature type="helix" evidence="32">
    <location>
        <begin position="325"/>
        <end position="338"/>
    </location>
</feature>
<feature type="helix" evidence="32">
    <location>
        <begin position="344"/>
        <end position="350"/>
    </location>
</feature>
<feature type="helix" evidence="32">
    <location>
        <begin position="353"/>
        <end position="358"/>
    </location>
</feature>
<feature type="helix" evidence="32">
    <location>
        <begin position="359"/>
        <end position="362"/>
    </location>
</feature>
<feature type="helix" evidence="32">
    <location>
        <begin position="366"/>
        <end position="380"/>
    </location>
</feature>
<feature type="helix" evidence="32">
    <location>
        <begin position="390"/>
        <end position="397"/>
    </location>
</feature>
<feature type="turn" evidence="32">
    <location>
        <begin position="398"/>
        <end position="401"/>
    </location>
</feature>
<feature type="helix" evidence="32">
    <location>
        <begin position="405"/>
        <end position="418"/>
    </location>
</feature>
<feature type="turn" evidence="32">
    <location>
        <begin position="419"/>
        <end position="421"/>
    </location>
</feature>
<feature type="helix" evidence="32">
    <location>
        <begin position="423"/>
        <end position="429"/>
    </location>
</feature>
<feature type="turn" evidence="32">
    <location>
        <begin position="430"/>
        <end position="433"/>
    </location>
</feature>
<feature type="helix" evidence="32">
    <location>
        <begin position="434"/>
        <end position="445"/>
    </location>
</feature>
<feature type="helix" evidence="32">
    <location>
        <begin position="449"/>
        <end position="462"/>
    </location>
</feature>
<feature type="strand" evidence="32">
    <location>
        <begin position="464"/>
        <end position="466"/>
    </location>
</feature>
<feature type="helix" evidence="32">
    <location>
        <begin position="469"/>
        <end position="477"/>
    </location>
</feature>
<feature type="turn" evidence="32">
    <location>
        <begin position="478"/>
        <end position="480"/>
    </location>
</feature>
<feature type="helix" evidence="32">
    <location>
        <begin position="481"/>
        <end position="487"/>
    </location>
</feature>
<feature type="helix" evidence="32">
    <location>
        <begin position="488"/>
        <end position="490"/>
    </location>
</feature>
<feature type="helix" evidence="32">
    <location>
        <begin position="495"/>
        <end position="508"/>
    </location>
</feature>
<feature type="helix" evidence="32">
    <location>
        <begin position="512"/>
        <end position="514"/>
    </location>
</feature>
<feature type="helix" evidence="32">
    <location>
        <begin position="515"/>
        <end position="520"/>
    </location>
</feature>
<feature type="helix" evidence="32">
    <location>
        <begin position="523"/>
        <end position="543"/>
    </location>
</feature>
<feature type="helix" evidence="32">
    <location>
        <begin position="556"/>
        <end position="570"/>
    </location>
</feature>
<feature type="helix" evidence="32">
    <location>
        <begin position="574"/>
        <end position="582"/>
    </location>
</feature>
<feature type="helix" evidence="32">
    <location>
        <begin position="586"/>
        <end position="592"/>
    </location>
</feature>
<feature type="helix" evidence="32">
    <location>
        <begin position="598"/>
        <end position="611"/>
    </location>
</feature>
<feature type="helix" evidence="32">
    <location>
        <begin position="615"/>
        <end position="623"/>
    </location>
</feature>
<feature type="turn" evidence="32">
    <location>
        <begin position="624"/>
        <end position="626"/>
    </location>
</feature>
<feature type="helix" evidence="32">
    <location>
        <begin position="627"/>
        <end position="633"/>
    </location>
</feature>
<feature type="helix" evidence="32">
    <location>
        <begin position="639"/>
        <end position="651"/>
    </location>
</feature>
<feature type="helix" evidence="32">
    <location>
        <begin position="662"/>
        <end position="667"/>
    </location>
</feature>
<comment type="function">
    <text evidence="1">Common junctional plaque protein. The membrane-associated plaques are architectural elements in an important strategic position to influence the arrangement and function of both the cytoskeleton and the cells within the tissue. The presence of plakoglobin in both the desmosomes and in the intermediate junctions suggests that it plays a central role in the structure and function of submembranous plaques. Acts as a substrate for VE-PTP and is required by it to stimulate VE-cadherin function in endothelial cells. Can replace beta-catenin in E-cadherin/catenin adhesion complexes which are proposed to couple cadherins to the actin cytoskeleton (By similarity).</text>
</comment>
<comment type="subunit">
    <text evidence="1 4 5 10 13 14 15 16 19 20 21 22">Homodimer. Component of an E-cadherin/catenin adhesion complex composed of at least E-cadherin/CDH1 and gamma-catenin/JUP, and possibly alpha-catenin/CTNNA1; the complex is located to adherens junctions. The stable association of CTNNA1 is controversial as CTNNA1 was shown not to bind to F-actin when assembled in the complex. Interacts with MUC1. Interacts with CAV1 (By similarity). Interacts with PTPRJ. Interacts with DSG1. Interacts with DSC1 and DSC2. Interacts with PKP2 (PubMed:11790773, PubMed:22781308). Interacts with PKP3 (via N-terminus); the interaction is required for PKP3 localization to desmosome cell-cell junctions (PubMed:20859650). Interacts with DSG4 (PubMed:21495994).</text>
</comment>
<comment type="interaction">
    <interactant intactId="EBI-702484">
        <id>P14923</id>
    </interactant>
    <interactant intactId="EBI-727707">
        <id>P25054</id>
        <label>APC</label>
    </interactant>
    <organismsDiffer>false</organismsDiffer>
    <experiments>3</experiments>
</comment>
<comment type="interaction">
    <interactant intactId="EBI-702484">
        <id>P14923</id>
    </interactant>
    <interactant intactId="EBI-16429430">
        <id>A0A0S2Z4M1</id>
        <label>AXIN1</label>
    </interactant>
    <organismsDiffer>false</organismsDiffer>
    <experiments>3</experiments>
</comment>
<comment type="interaction">
    <interactant intactId="EBI-702484">
        <id>P14923</id>
    </interactant>
    <interactant intactId="EBI-710484">
        <id>O15169</id>
        <label>AXIN1</label>
    </interactant>
    <organismsDiffer>false</organismsDiffer>
    <experiments>4</experiments>
</comment>
<comment type="interaction">
    <interactant intactId="EBI-702484">
        <id>P14923</id>
    </interactant>
    <interactant intactId="EBI-1055224">
        <id>Q9HAW0</id>
        <label>BRF2</label>
    </interactant>
    <organismsDiffer>false</organismsDiffer>
    <experiments>2</experiments>
</comment>
<comment type="interaction">
    <interactant intactId="EBI-702484">
        <id>P14923</id>
    </interactant>
    <interactant intactId="EBI-2256711">
        <id>P19022</id>
        <label>CDH2</label>
    </interactant>
    <organismsDiffer>false</organismsDiffer>
    <experiments>2</experiments>
</comment>
<comment type="interaction">
    <interactant intactId="EBI-702484">
        <id>P14923</id>
    </interactant>
    <interactant intactId="EBI-11962928">
        <id>Q9UI47-2</id>
        <label>CTNNA3</label>
    </interactant>
    <organismsDiffer>false</organismsDiffer>
    <experiments>3</experiments>
</comment>
<comment type="interaction">
    <interactant intactId="EBI-702484">
        <id>P14923</id>
    </interactant>
    <interactant intactId="EBI-747082">
        <id>Q9NSA3</id>
        <label>CTNNBIP1</label>
    </interactant>
    <organismsDiffer>false</organismsDiffer>
    <experiments>5</experiments>
</comment>
<comment type="interaction">
    <interactant intactId="EBI-702484">
        <id>P14923</id>
    </interactant>
    <interactant intactId="EBI-351257">
        <id>P26196</id>
        <label>DDX6</label>
    </interactant>
    <organismsDiffer>false</organismsDiffer>
    <experiments>4</experiments>
</comment>
<comment type="interaction">
    <interactant intactId="EBI-702484">
        <id>P14923</id>
    </interactant>
    <interactant intactId="EBI-1045757">
        <id>Q02413</id>
        <label>DSG1</label>
    </interactant>
    <organismsDiffer>false</organismsDiffer>
    <experiments>2</experiments>
</comment>
<comment type="interaction">
    <interactant intactId="EBI-702484">
        <id>P14923</id>
    </interactant>
    <interactant intactId="EBI-297353">
        <id>P00533</id>
        <label>EGFR</label>
    </interactant>
    <organismsDiffer>false</organismsDiffer>
    <experiments>3</experiments>
</comment>
<comment type="interaction">
    <interactant intactId="EBI-702484">
        <id>P14923</id>
    </interactant>
    <interactant intactId="EBI-701903">
        <id>Q14192</id>
        <label>FHL2</label>
    </interactant>
    <organismsDiffer>false</organismsDiffer>
    <experiments>7</experiments>
</comment>
<comment type="interaction">
    <interactant intactId="EBI-702484">
        <id>P14923</id>
    </interactant>
    <interactant intactId="EBI-9639760">
        <id>P23327</id>
        <label>HRC</label>
    </interactant>
    <organismsDiffer>false</organismsDiffer>
    <experiments>2</experiments>
</comment>
<comment type="interaction">
    <interactant intactId="EBI-702484">
        <id>P14923</id>
    </interactant>
    <interactant intactId="EBI-741158">
        <id>Q96HA8</id>
        <label>NTAQ1</label>
    </interactant>
    <organismsDiffer>false</organismsDiffer>
    <experiments>3</experiments>
</comment>
<comment type="interaction">
    <interactant intactId="EBI-702484">
        <id>P14923</id>
    </interactant>
    <interactant intactId="EBI-716404">
        <id>P16284</id>
        <label>PECAM1</label>
    </interactant>
    <organismsDiffer>false</organismsDiffer>
    <experiments>7</experiments>
</comment>
<comment type="interaction">
    <interactant intactId="EBI-702484">
        <id>P14923</id>
    </interactant>
    <interactant intactId="EBI-11986293">
        <id>P0CG20</id>
        <label>PRR35</label>
    </interactant>
    <organismsDiffer>false</organismsDiffer>
    <experiments>3</experiments>
</comment>
<comment type="interaction">
    <interactant intactId="EBI-702484">
        <id>P14923</id>
    </interactant>
    <interactant intactId="EBI-748350">
        <id>Q9UHP6</id>
        <label>RSPH14</label>
    </interactant>
    <organismsDiffer>false</organismsDiffer>
    <experiments>3</experiments>
</comment>
<comment type="interaction">
    <interactant intactId="EBI-702484">
        <id>P14923</id>
    </interactant>
    <interactant intactId="EBI-11746252">
        <id>Q9NQB0-10</id>
        <label>TCF7L2</label>
    </interactant>
    <organismsDiffer>false</organismsDiffer>
    <experiments>3</experiments>
</comment>
<comment type="subcellular location">
    <subcellularLocation>
        <location evidence="16">Cell junction</location>
        <location evidence="16">Adherens junction</location>
    </subcellularLocation>
    <subcellularLocation>
        <location evidence="15 16 17">Cell junction</location>
        <location evidence="15 16 17">Desmosome</location>
    </subcellularLocation>
    <subcellularLocation>
        <location evidence="16">Cytoplasm</location>
        <location evidence="16">Cytoskeleton</location>
    </subcellularLocation>
    <subcellularLocation>
        <location evidence="4 13 16">Cell membrane</location>
        <topology evidence="16">Peripheral membrane protein</topology>
    </subcellularLocation>
    <subcellularLocation>
        <location evidence="2">Cytoplasm</location>
    </subcellularLocation>
    <subcellularLocation>
        <location evidence="2">Cell junction</location>
    </subcellularLocation>
    <subcellularLocation>
        <location evidence="2">Nucleus</location>
    </subcellularLocation>
    <text evidence="15">Cytoplasmic in a soluble and membrane-associated form. Colocalizes with DSG4 at desmosomes (PubMed:21495994).</text>
</comment>
<comment type="tissue specificity">
    <text evidence="18">Expressed in the heart (at protein level).</text>
</comment>
<comment type="domain">
    <text evidence="10 20">The entire ARM repeats region mediates binding to CDH1/E-cadherin. The N-terminus and first three ARM repeats are sufficient for binding to DSG1. The N-terminus and first ARM repeat are sufficient for association with CTNNA1. DSC1 association requires both ends of the ARM repeat region.</text>
</comment>
<comment type="PTM">
    <text evidence="7">May be phosphorylated by FER.</text>
</comment>
<comment type="disease" evidence="3">
    <disease id="DI-00798">
        <name>Naxos disease</name>
        <acronym>NXD</acronym>
        <description>An autosomal recessive disorder characterized by the association of diffuse non-epidermolytic palmoplantar keratoderma with woolly hair and cardiac abnormalities such as dilated cardiomyopathy and arrhythmogenic right ventricular dysplasia.</description>
        <dbReference type="MIM" id="601214"/>
    </disease>
    <text>The disease is caused by variants affecting the gene represented in this entry.</text>
</comment>
<comment type="disease" evidence="9 12">
    <disease id="DI-01556">
        <name>Arrhythmogenic right ventricular dysplasia, familial, 12</name>
        <acronym>ARVD12</acronym>
        <description>A congenital heart disease characterized by infiltration of adipose and fibrous tissue into the right ventricle and loss of myocardial cells, resulting in ventricular and supraventricular arrhythmias.</description>
        <dbReference type="MIM" id="611528"/>
    </disease>
    <text>The disease is caused by variants affecting the gene represented in this entry.</text>
</comment>
<comment type="similarity">
    <text evidence="26">Belongs to the beta-catenin family.</text>
</comment>
<comment type="sequence caution" evidence="26">
    <conflict type="erroneous initiation">
        <sequence resource="EMBL-CDS" id="AAH00441"/>
    </conflict>
    <text>Extended N-terminus.</text>
</comment>
<reference key="1">
    <citation type="journal article" date="1989" name="Proc. Natl. Acad. Sci. U.S.A.">
        <title>Molecular cloning and amino acid sequence of human plakoglobin, the common junctional plaque protein.</title>
        <authorList>
            <person name="Franke W.W."/>
            <person name="Goldschmidt M.D."/>
            <person name="Zimbelmann R."/>
            <person name="Mueller H.M."/>
            <person name="Schiller D.L."/>
            <person name="Cowin P."/>
        </authorList>
    </citation>
    <scope>NUCLEOTIDE SEQUENCE [MRNA]</scope>
</reference>
<reference key="2">
    <citation type="submission" date="1995-12" db="EMBL/GenBank/DDBJ databases">
        <authorList>
            <person name="Zimbelmann R."/>
        </authorList>
    </citation>
    <scope>NUCLEOTIDE SEQUENCE [MRNA]</scope>
</reference>
<reference key="3">
    <citation type="journal article" date="2000" name="Exp. Dermatol.">
        <title>Genomic organization and amplification of the human plakoglobin gene (JUP).</title>
        <authorList>
            <person name="Whittock N.V."/>
            <person name="Eady R.A.J."/>
            <person name="McGrath J.A."/>
        </authorList>
    </citation>
    <scope>NUCLEOTIDE SEQUENCE [GENOMIC DNA]</scope>
</reference>
<reference key="4">
    <citation type="submission" date="2003-02" db="EMBL/GenBank/DDBJ databases">
        <title>Homo sapiens gamma-catenin mRNA from human KB epidermoid adenocarcinoma cells.</title>
        <authorList>
            <person name="Liang X.-J."/>
            <person name="Gottesman M.M."/>
        </authorList>
    </citation>
    <scope>NUCLEOTIDE SEQUENCE [MRNA]</scope>
    <scope>VARIANT LEU-697</scope>
    <source>
        <tissue>Epidermal carcinoma</tissue>
    </source>
</reference>
<reference key="5">
    <citation type="journal article" date="2006" name="Nature">
        <title>DNA sequence of human chromosome 17 and analysis of rearrangement in the human lineage.</title>
        <authorList>
            <person name="Zody M.C."/>
            <person name="Garber M."/>
            <person name="Adams D.J."/>
            <person name="Sharpe T."/>
            <person name="Harrow J."/>
            <person name="Lupski J.R."/>
            <person name="Nicholson C."/>
            <person name="Searle S.M."/>
            <person name="Wilming L."/>
            <person name="Young S.K."/>
            <person name="Abouelleil A."/>
            <person name="Allen N.R."/>
            <person name="Bi W."/>
            <person name="Bloom T."/>
            <person name="Borowsky M.L."/>
            <person name="Bugalter B.E."/>
            <person name="Butler J."/>
            <person name="Chang J.L."/>
            <person name="Chen C.-K."/>
            <person name="Cook A."/>
            <person name="Corum B."/>
            <person name="Cuomo C.A."/>
            <person name="de Jong P.J."/>
            <person name="DeCaprio D."/>
            <person name="Dewar K."/>
            <person name="FitzGerald M."/>
            <person name="Gilbert J."/>
            <person name="Gibson R."/>
            <person name="Gnerre S."/>
            <person name="Goldstein S."/>
            <person name="Grafham D.V."/>
            <person name="Grocock R."/>
            <person name="Hafez N."/>
            <person name="Hagopian D.S."/>
            <person name="Hart E."/>
            <person name="Norman C.H."/>
            <person name="Humphray S."/>
            <person name="Jaffe D.B."/>
            <person name="Jones M."/>
            <person name="Kamal M."/>
            <person name="Khodiyar V.K."/>
            <person name="LaButti K."/>
            <person name="Laird G."/>
            <person name="Lehoczky J."/>
            <person name="Liu X."/>
            <person name="Lokyitsang T."/>
            <person name="Loveland J."/>
            <person name="Lui A."/>
            <person name="Macdonald P."/>
            <person name="Major J.E."/>
            <person name="Matthews L."/>
            <person name="Mauceli E."/>
            <person name="McCarroll S.A."/>
            <person name="Mihalev A.H."/>
            <person name="Mudge J."/>
            <person name="Nguyen C."/>
            <person name="Nicol R."/>
            <person name="O'Leary S.B."/>
            <person name="Osoegawa K."/>
            <person name="Schwartz D.C."/>
            <person name="Shaw-Smith C."/>
            <person name="Stankiewicz P."/>
            <person name="Steward C."/>
            <person name="Swarbreck D."/>
            <person name="Venkataraman V."/>
            <person name="Whittaker C.A."/>
            <person name="Yang X."/>
            <person name="Zimmer A.R."/>
            <person name="Bradley A."/>
            <person name="Hubbard T."/>
            <person name="Birren B.W."/>
            <person name="Rogers J."/>
            <person name="Lander E.S."/>
            <person name="Nusbaum C."/>
        </authorList>
    </citation>
    <scope>NUCLEOTIDE SEQUENCE [LARGE SCALE GENOMIC DNA]</scope>
</reference>
<reference key="6">
    <citation type="submission" date="2005-07" db="EMBL/GenBank/DDBJ databases">
        <authorList>
            <person name="Mural R.J."/>
            <person name="Istrail S."/>
            <person name="Sutton G.G."/>
            <person name="Florea L."/>
            <person name="Halpern A.L."/>
            <person name="Mobarry C.M."/>
            <person name="Lippert R."/>
            <person name="Walenz B."/>
            <person name="Shatkay H."/>
            <person name="Dew I."/>
            <person name="Miller J.R."/>
            <person name="Flanigan M.J."/>
            <person name="Edwards N.J."/>
            <person name="Bolanos R."/>
            <person name="Fasulo D."/>
            <person name="Halldorsson B.V."/>
            <person name="Hannenhalli S."/>
            <person name="Turner R."/>
            <person name="Yooseph S."/>
            <person name="Lu F."/>
            <person name="Nusskern D.R."/>
            <person name="Shue B.C."/>
            <person name="Zheng X.H."/>
            <person name="Zhong F."/>
            <person name="Delcher A.L."/>
            <person name="Huson D.H."/>
            <person name="Kravitz S.A."/>
            <person name="Mouchard L."/>
            <person name="Reinert K."/>
            <person name="Remington K.A."/>
            <person name="Clark A.G."/>
            <person name="Waterman M.S."/>
            <person name="Eichler E.E."/>
            <person name="Adams M.D."/>
            <person name="Hunkapiller M.W."/>
            <person name="Myers E.W."/>
            <person name="Venter J.C."/>
        </authorList>
    </citation>
    <scope>NUCLEOTIDE SEQUENCE [LARGE SCALE GENOMIC DNA]</scope>
    <scope>VARIANT LEU-697</scope>
</reference>
<reference key="7">
    <citation type="journal article" date="2004" name="Genome Res.">
        <title>The status, quality, and expansion of the NIH full-length cDNA project: the Mammalian Gene Collection (MGC).</title>
        <authorList>
            <consortium name="The MGC Project Team"/>
        </authorList>
    </citation>
    <scope>NUCLEOTIDE SEQUENCE [LARGE SCALE MRNA]</scope>
    <scope>VARIANT LEU-697</scope>
    <source>
        <tissue>Lung</tissue>
        <tissue>Placenta</tissue>
    </source>
</reference>
<reference key="8">
    <citation type="submission" date="2008-03" db="UniProtKB">
        <authorList>
            <person name="Bienvenut W.V."/>
            <person name="Vousden K.H."/>
            <person name="Lukashchuk N."/>
            <person name="Calvo F."/>
            <person name="Kolch W."/>
        </authorList>
    </citation>
    <scope>PROTEIN SEQUENCE OF 1-12; 116-142; 150-172; 177-203; 217-233; 273-279; 304-320; 327-333; 368-394; 427-460; 466-533; 583-602; 638-661 AND 664-674</scope>
    <scope>ACETYLATION AT MET-1</scope>
    <scope>IDENTIFICATION BY MASS SPECTROMETRY</scope>
    <source>
        <tissue>Cervix carcinoma</tissue>
        <tissue>Lung carcinoma</tissue>
    </source>
</reference>
<reference key="9">
    <citation type="journal article" date="2000" name="Lancet">
        <title>Identification of a deletion in plakoglobin in arrhythmogenic right ventricular cardiomyopathy with palmoplantar keratoderma and woolly hair (Naxos disease).</title>
        <authorList>
            <person name="McKoy G."/>
            <person name="Protonotarios N."/>
            <person name="Crosby A."/>
            <person name="Tsatsopoulou A."/>
            <person name="Anastasakis A."/>
            <person name="Coonar A."/>
            <person name="Norman M."/>
            <person name="Baboonian C."/>
            <person name="Jeffery S."/>
            <person name="McKenna W.J."/>
        </authorList>
    </citation>
    <scope>NUCLEOTIDE SEQUENCE [GENOMIC DNA] OF 634-745</scope>
    <scope>VARIANT LEU-697</scope>
    <scope>INVOLVEMENT IN NAXOS DISEASE</scope>
    <source>
        <tissue>Leukocyte</tissue>
    </source>
</reference>
<reference key="10">
    <citation type="journal article" date="1994" name="FEBS Lett.">
        <title>Distinct cadherin-catenin complexes in Ca(2+)-dependent cell-cell adhesion.</title>
        <authorList>
            <person name="Butz S."/>
            <person name="Kemler R."/>
        </authorList>
    </citation>
    <scope>IDENTIFICATION IN AN E-CADHERIN/CATENIN ADHESION COMPLEX</scope>
</reference>
<reference key="11">
    <citation type="journal article" date="1996" name="J. Biol. Chem.">
        <title>Desmosomal cadherin binding domains of plakoglobin.</title>
        <authorList>
            <person name="Witcher L.L."/>
            <person name="Collins R."/>
            <person name="Puttagunta S."/>
            <person name="Mechanic S.E."/>
            <person name="Munson M."/>
            <person name="Gumbiner B."/>
            <person name="Cowin P."/>
        </authorList>
    </citation>
    <scope>DOMAIN</scope>
    <scope>INTERACTION WITH CTNNA1; DSC1 AND DSG1</scope>
</reference>
<reference key="12">
    <citation type="journal article" date="1997" name="J. Biol. Chem.">
        <title>Interaction of the DF3/MUC1 breast carcinoma-associated antigen and beta-catenin in cell adhesion.</title>
        <authorList>
            <person name="Yamamoto M."/>
            <person name="Bharti A."/>
            <person name="Li Y."/>
            <person name="Kufe D."/>
        </authorList>
    </citation>
    <scope>INTERACTION WITH MUC1</scope>
</reference>
<reference key="13">
    <citation type="journal article" date="1997" name="J. Cell Sci.">
        <title>Characterization of the interactions of alpha-catenin with alpha-actinin and beta-catenin/plakoglobin.</title>
        <authorList>
            <person name="Nieset J.E."/>
            <person name="Redfield A.R."/>
            <person name="Jin F."/>
            <person name="Knudsen K.A."/>
            <person name="Johnson K.R."/>
            <person name="Wheelock M.J."/>
        </authorList>
    </citation>
    <scope>INTERACTION WITH CTNNA1</scope>
</reference>
<reference key="14">
    <citation type="journal article" date="2002" name="J. Biol. Chem.">
        <title>Protein binding and functional characterization of plakophilin 2. Evidence for its diverse roles in desmosomes and beta -catenin signaling.</title>
        <authorList>
            <person name="Chen X."/>
            <person name="Bonne S."/>
            <person name="Hatzfeld M."/>
            <person name="van Roy F."/>
            <person name="Green K.J."/>
        </authorList>
    </citation>
    <scope>INTERACTION WITH PKP2</scope>
    <scope>SUBCELLULAR LOCATION</scope>
</reference>
<reference key="15">
    <citation type="journal article" date="2002" name="Oncogene">
        <title>The transmembrane receptor protein tyrosine phosphatase DEP1 interacts with p120(ctn).</title>
        <authorList>
            <person name="Holsinger L.J."/>
            <person name="Ward K."/>
            <person name="Duffield B."/>
            <person name="Zachwieja J."/>
            <person name="Jallal B."/>
        </authorList>
    </citation>
    <scope>INTERACTION WITH PTPRJ</scope>
</reference>
<reference key="16">
    <citation type="journal article" date="2003" name="J. Biol. Chem.">
        <title>Plakoglobin is O-glycosylated close to the N-terminal destruction box.</title>
        <authorList>
            <person name="Hatsell S."/>
            <person name="Medina L."/>
            <person name="Merola J."/>
            <person name="Haltiwanger R."/>
            <person name="Cowin P."/>
        </authorList>
    </citation>
    <scope>GLYCOSYLATION AT THR-14</scope>
    <scope>MUTAGENESIS OF THR-14; THR-19; THR-21; SER-24; SER-28 AND THR-32</scope>
</reference>
<reference key="17">
    <citation type="journal article" date="2003" name="Mol. Cell. Biol.">
        <title>Tyrosine phosphorylation of plakoglobin causes contrary effects on its association with desmosomes and adherens junction components and modulates beta-catenin-mediated transcription.</title>
        <authorList>
            <person name="Miravet S."/>
            <person name="Piedra J."/>
            <person name="Castano J."/>
            <person name="Raurell I."/>
            <person name="Franci C."/>
            <person name="Dunach M."/>
            <person name="Garcia de Herreros A."/>
        </authorList>
    </citation>
    <scope>PHOSPHORYLATION BY FER</scope>
</reference>
<reference key="18">
    <citation type="journal article" date="2006" name="Cell">
        <title>Global, in vivo, and site-specific phosphorylation dynamics in signaling networks.</title>
        <authorList>
            <person name="Olsen J.V."/>
            <person name="Blagoev B."/>
            <person name="Gnad F."/>
            <person name="Macek B."/>
            <person name="Kumar C."/>
            <person name="Mortensen P."/>
            <person name="Mann M."/>
        </authorList>
    </citation>
    <scope>PHOSPHORYLATION [LARGE SCALE ANALYSIS] AT SER-182 AND SER-665</scope>
    <scope>IDENTIFICATION BY MASS SPECTROMETRY [LARGE SCALE ANALYSIS]</scope>
    <source>
        <tissue>Cervix carcinoma</tissue>
    </source>
</reference>
<reference key="19">
    <citation type="journal article" date="2010" name="Sci. Signal.">
        <title>Quantitative phosphoproteomics reveals widespread full phosphorylation site occupancy during mitosis.</title>
        <authorList>
            <person name="Olsen J.V."/>
            <person name="Vermeulen M."/>
            <person name="Santamaria A."/>
            <person name="Kumar C."/>
            <person name="Miller M.L."/>
            <person name="Jensen L.J."/>
            <person name="Gnad F."/>
            <person name="Cox J."/>
            <person name="Jensen T.S."/>
            <person name="Nigg E.A."/>
            <person name="Brunak S."/>
            <person name="Mann M."/>
        </authorList>
    </citation>
    <scope>PHOSPHORYLATION [LARGE SCALE ANALYSIS] AT SER-665</scope>
    <scope>IDENTIFICATION BY MASS SPECTROMETRY [LARGE SCALE ANALYSIS]</scope>
    <source>
        <tissue>Cervix carcinoma</tissue>
    </source>
</reference>
<reference key="20">
    <citation type="journal article" date="2011" name="BMC Syst. Biol.">
        <title>Initial characterization of the human central proteome.</title>
        <authorList>
            <person name="Burkard T.R."/>
            <person name="Planyavsky M."/>
            <person name="Kaupe I."/>
            <person name="Breitwieser F.P."/>
            <person name="Buerckstuemmer T."/>
            <person name="Bennett K.L."/>
            <person name="Superti-Furga G."/>
            <person name="Colinge J."/>
        </authorList>
    </citation>
    <scope>IDENTIFICATION BY MASS SPECTROMETRY [LARGE SCALE ANALYSIS]</scope>
</reference>
<reference key="21">
    <citation type="journal article" date="2011" name="Br. J. Dermatol.">
        <title>A case of monilethrix caused by novel compound heterozygous mutations in the desmoglein 4 (DSG4) gene.</title>
        <authorList>
            <person name="Farooq M."/>
            <person name="Ito M."/>
            <person name="Naito M."/>
            <person name="Shimomura Y."/>
        </authorList>
    </citation>
    <scope>INTERACTION WITH DSG4</scope>
    <scope>SUBCELLULAR LOCATION</scope>
</reference>
<reference key="22">
    <citation type="journal article" date="2011" name="Cardiovasc. Res.">
        <title>Mechanistic insights into arrhythmogenic right ventricular cardiomyopathy caused by desmocollin-2 mutations.</title>
        <authorList>
            <person name="Gehmlich K."/>
            <person name="Syrris P."/>
            <person name="Peskett E."/>
            <person name="Evans A."/>
            <person name="Ehler E."/>
            <person name="Asimaki A."/>
            <person name="Anastasakis A."/>
            <person name="Tsatsopoulou A."/>
            <person name="Vouliotis A.I."/>
            <person name="Stefanadis C."/>
            <person name="Saffitz J.E."/>
            <person name="Protonotarios N."/>
            <person name="McKenna W.J."/>
        </authorList>
    </citation>
    <scope>INTERACTION WITH DSC2</scope>
</reference>
<reference key="23">
    <citation type="journal article" date="2011" name="Cell. Mol. Life Sci.">
        <title>E-cadherin and plakoglobin recruit plakophilin3 to the cell border to initiate desmosome assembly.</title>
        <authorList>
            <person name="Gosavi P."/>
            <person name="Kundu S.T."/>
            <person name="Khapare N."/>
            <person name="Sehgal L."/>
            <person name="Karkhanis M.S."/>
            <person name="Dalal S.N."/>
        </authorList>
    </citation>
    <scope>INTERACTION WITH PKP3</scope>
    <scope>SUBCELLULAR LOCATION</scope>
</reference>
<reference key="24">
    <citation type="journal article" date="2012" name="Circ. Cardiovasc. Genet.">
        <title>Molecular insights into arrhythmogenic right ventricular cardiomyopathy caused by plakophilin-2 missense mutations.</title>
        <authorList>
            <person name="Kirchner F."/>
            <person name="Schuetz A."/>
            <person name="Boldt L.H."/>
            <person name="Martens K."/>
            <person name="Dittmar G."/>
            <person name="Haverkamp W."/>
            <person name="Thierfelder L."/>
            <person name="Heinemann U."/>
            <person name="Gerull B."/>
        </authorList>
    </citation>
    <scope>INTERACTION WITH PKP2</scope>
    <scope>SUBCELLULAR LOCATION</scope>
</reference>
<reference key="25">
    <citation type="journal article" date="2012" name="Mol. Cell. Proteomics">
        <title>Comparative large-scale characterisation of plant vs. mammal proteins reveals similar and idiosyncratic N-alpha acetylation features.</title>
        <authorList>
            <person name="Bienvenut W.V."/>
            <person name="Sumpton D."/>
            <person name="Martinez A."/>
            <person name="Lilla S."/>
            <person name="Espagne C."/>
            <person name="Meinnel T."/>
            <person name="Giglione C."/>
        </authorList>
    </citation>
    <scope>ACETYLATION [LARGE SCALE ANALYSIS] AT MET-1</scope>
    <scope>IDENTIFICATION BY MASS SPECTROMETRY [LARGE SCALE ANALYSIS]</scope>
</reference>
<reference key="26">
    <citation type="journal article" date="2014" name="J. Proteomics">
        <title>An enzyme assisted RP-RPLC approach for in-depth analysis of human liver phosphoproteome.</title>
        <authorList>
            <person name="Bian Y."/>
            <person name="Song C."/>
            <person name="Cheng K."/>
            <person name="Dong M."/>
            <person name="Wang F."/>
            <person name="Huang J."/>
            <person name="Sun D."/>
            <person name="Wang L."/>
            <person name="Ye M."/>
            <person name="Zou H."/>
        </authorList>
    </citation>
    <scope>PHOSPHORYLATION [LARGE SCALE ANALYSIS] AT SER-99; SER-125; SER-182 AND SER-730</scope>
    <scope>IDENTIFICATION BY MASS SPECTROMETRY [LARGE SCALE ANALYSIS]</scope>
    <source>
        <tissue>Liver</tissue>
    </source>
</reference>
<reference key="27">
    <citation type="journal article" date="2014" name="Mol. Biol. Cell">
        <title>Plakophilin 3 mediates Rap1-dependent desmosome assembly and adherens junction maturation.</title>
        <authorList>
            <person name="Todorovic V."/>
            <person name="Koetsier J.L."/>
            <person name="Godsel L.M."/>
            <person name="Green K.J."/>
        </authorList>
    </citation>
    <scope>SUBCELLULAR LOCATION</scope>
</reference>
<reference key="28">
    <citation type="journal article" date="2021" name="Clin. Transl. Med.">
        <title>Deciphering DSC2 arrhythmogenic cardiomyopathy electrical instability: From ion channels to ECG and tailored drug therapy.</title>
        <authorList>
            <person name="Moreau A."/>
            <person name="Reisqs J.B."/>
            <person name="Delanoe-Ayari H."/>
            <person name="Pierre M."/>
            <person name="Janin A."/>
            <person name="Deliniere A."/>
            <person name="Bessiere F."/>
            <person name="Meli A.C."/>
            <person name="Charrabi A."/>
            <person name="Lafont E."/>
            <person name="Valla C."/>
            <person name="Bauer D."/>
            <person name="Morel E."/>
            <person name="Gache V."/>
            <person name="Millat G."/>
            <person name="Nissan X."/>
            <person name="Faucherre A."/>
            <person name="Jopling C."/>
            <person name="Richard S."/>
            <person name="Mejat A."/>
            <person name="Chevalier P."/>
        </authorList>
    </citation>
    <scope>TISSUE SPECIFICITY</scope>
</reference>
<reference key="29">
    <citation type="journal article" date="2009" name="J. Biol. Chem.">
        <title>Interactions of plakoglobin and beta-catenin with desmosomal cadherins: basis of selective exclusion of alpha- and beta-catenin from desmosomes.</title>
        <authorList>
            <person name="Choi H.J."/>
            <person name="Gross J.C."/>
            <person name="Pokutta S."/>
            <person name="Weis W.I."/>
        </authorList>
    </citation>
    <scope>X-RAY CRYSTALLOGRAPHY (2.8 ANGSTROMS) OF 124-676 IN COMPLEX WITH PHOSPHORYLATED MOUSE E-CADHERIN</scope>
    <scope>DOMAIN ARM REPEATS</scope>
    <scope>INTERACTION WITH DSC1 AND DSG1</scope>
</reference>
<reference key="30">
    <citation type="journal article" date="2007" name="Am. J. Hum. Genet.">
        <title>A novel dominant mutation in plakoglobin causes arrhythmogenic right ventricular cardiomyopathy.</title>
        <authorList>
            <person name="Asimaki A."/>
            <person name="Syrris P."/>
            <person name="Wichter T."/>
            <person name="Matthias P."/>
            <person name="Saffitz J.E."/>
            <person name="McKenna W.J."/>
        </authorList>
    </citation>
    <scope>VARIANT ARVD12 SER-39 INS</scope>
    <scope>CHARACTERIZATION OF VARIANT ARVD12 SER-39 INS</scope>
</reference>
<reference key="31">
    <citation type="journal article" date="2009" name="Circ. Cardiovasc. Genet.">
        <title>Comprehensive desmosome mutation analysis in North Americans with arrhythmogenic right ventricular dysplasia/cardiomyopathy.</title>
        <authorList>
            <person name="den Haan A.D."/>
            <person name="Tan B.Y."/>
            <person name="Zikusoka M.N."/>
            <person name="Llado L.I."/>
            <person name="Jain R."/>
            <person name="Daly A."/>
            <person name="Tichnell C."/>
            <person name="James C."/>
            <person name="Amat-Alarcon N."/>
            <person name="Abraham T."/>
            <person name="Russell S.D."/>
            <person name="Bluemke D.A."/>
            <person name="Calkins H."/>
            <person name="Dalal D."/>
            <person name="Judge D.P."/>
        </authorList>
    </citation>
    <scope>VARIANT ARVD12 ILE-19</scope>
    <scope>VARIANTS HIS-142; ILE-648 AND LEU-697</scope>
</reference>
<reference key="32">
    <citation type="journal article" date="2010" name="Clin. Genet.">
        <title>Role of genetic testing in arrhythmogenic right ventricular cardiomyopathy/dysplasia.</title>
        <authorList>
            <person name="Barahona-Dussault C."/>
            <person name="Benito B."/>
            <person name="Campuzano O."/>
            <person name="Iglesias A."/>
            <person name="Leung T.L."/>
            <person name="Robb L."/>
            <person name="Talajic M."/>
            <person name="Brugada R."/>
        </authorList>
    </citation>
    <scope>VARIANTS HIS-142 AND LEU-697</scope>
</reference>
<dbReference type="EMBL" id="M23410">
    <property type="protein sequence ID" value="AAA64895.1"/>
    <property type="molecule type" value="mRNA"/>
</dbReference>
<dbReference type="EMBL" id="Z68228">
    <property type="protein sequence ID" value="CAA92522.1"/>
    <property type="molecule type" value="mRNA"/>
</dbReference>
<dbReference type="EMBL" id="AF306723">
    <property type="protein sequence ID" value="AAG16727.1"/>
    <property type="molecule type" value="Genomic_DNA"/>
</dbReference>
<dbReference type="EMBL" id="AF233882">
    <property type="protein sequence ID" value="AAG16727.1"/>
    <property type="status" value="JOINED"/>
    <property type="molecule type" value="Genomic_DNA"/>
</dbReference>
<dbReference type="EMBL" id="AY243535">
    <property type="protein sequence ID" value="AAO85780.1"/>
    <property type="molecule type" value="mRNA"/>
</dbReference>
<dbReference type="EMBL" id="AC109319">
    <property type="status" value="NOT_ANNOTATED_CDS"/>
    <property type="molecule type" value="Genomic_DNA"/>
</dbReference>
<dbReference type="EMBL" id="CH471152">
    <property type="protein sequence ID" value="EAW60762.1"/>
    <property type="molecule type" value="Genomic_DNA"/>
</dbReference>
<dbReference type="EMBL" id="BC000441">
    <property type="protein sequence ID" value="AAH00441.2"/>
    <property type="status" value="ALT_INIT"/>
    <property type="molecule type" value="mRNA"/>
</dbReference>
<dbReference type="EMBL" id="BC011865">
    <property type="protein sequence ID" value="AAH11865.1"/>
    <property type="molecule type" value="mRNA"/>
</dbReference>
<dbReference type="EMBL" id="AJ249711">
    <property type="protein sequence ID" value="CAC04246.1"/>
    <property type="molecule type" value="Genomic_DNA"/>
</dbReference>
<dbReference type="CCDS" id="CCDS11407.1"/>
<dbReference type="PIR" id="A32905">
    <property type="entry name" value="A32905"/>
</dbReference>
<dbReference type="RefSeq" id="NP_001339702.1">
    <property type="nucleotide sequence ID" value="NM_001352773.2"/>
</dbReference>
<dbReference type="RefSeq" id="NP_001339703.1">
    <property type="nucleotide sequence ID" value="NM_001352774.2"/>
</dbReference>
<dbReference type="RefSeq" id="NP_001339704.1">
    <property type="nucleotide sequence ID" value="NM_001352775.2"/>
</dbReference>
<dbReference type="RefSeq" id="NP_001339705.1">
    <property type="nucleotide sequence ID" value="NM_001352776.2"/>
</dbReference>
<dbReference type="RefSeq" id="NP_001339706.1">
    <property type="nucleotide sequence ID" value="NM_001352777.2"/>
</dbReference>
<dbReference type="RefSeq" id="NP_002221.1">
    <property type="nucleotide sequence ID" value="NM_002230.4"/>
</dbReference>
<dbReference type="RefSeq" id="NP_068831.1">
    <property type="nucleotide sequence ID" value="NM_021991.4"/>
</dbReference>
<dbReference type="RefSeq" id="XP_006721936.1">
    <property type="nucleotide sequence ID" value="XM_006721873.2"/>
</dbReference>
<dbReference type="RefSeq" id="XP_006721937.1">
    <property type="nucleotide sequence ID" value="XM_006721874.4"/>
</dbReference>
<dbReference type="RefSeq" id="XP_006721938.1">
    <property type="nucleotide sequence ID" value="XM_006721875.2"/>
</dbReference>
<dbReference type="RefSeq" id="XP_006721941.1">
    <property type="nucleotide sequence ID" value="XM_006721878.1"/>
</dbReference>
<dbReference type="RefSeq" id="XP_011523055.1">
    <property type="nucleotide sequence ID" value="XM_011524753.2"/>
</dbReference>
<dbReference type="RefSeq" id="XP_011523057.1">
    <property type="nucleotide sequence ID" value="XM_011524755.1"/>
</dbReference>
<dbReference type="RefSeq" id="XP_011523058.1">
    <property type="nucleotide sequence ID" value="XM_011524756.1"/>
</dbReference>
<dbReference type="RefSeq" id="XP_011523059.1">
    <property type="nucleotide sequence ID" value="XM_011524757.2"/>
</dbReference>
<dbReference type="RefSeq" id="XP_011523060.1">
    <property type="nucleotide sequence ID" value="XM_011524758.2"/>
</dbReference>
<dbReference type="RefSeq" id="XP_016880079.1">
    <property type="nucleotide sequence ID" value="XM_017024590.2"/>
</dbReference>
<dbReference type="RefSeq" id="XP_047291894.1">
    <property type="nucleotide sequence ID" value="XM_047435938.1"/>
</dbReference>
<dbReference type="RefSeq" id="XP_047291895.1">
    <property type="nucleotide sequence ID" value="XM_047435939.1"/>
</dbReference>
<dbReference type="RefSeq" id="XP_047291896.1">
    <property type="nucleotide sequence ID" value="XM_047435940.1"/>
</dbReference>
<dbReference type="RefSeq" id="XP_047291897.1">
    <property type="nucleotide sequence ID" value="XM_047435941.1"/>
</dbReference>
<dbReference type="RefSeq" id="XP_047291898.1">
    <property type="nucleotide sequence ID" value="XM_047435942.1"/>
</dbReference>
<dbReference type="PDB" id="3IFQ">
    <property type="method" value="X-ray"/>
    <property type="resolution" value="2.80 A"/>
    <property type="chains" value="A/B=124-676"/>
</dbReference>
<dbReference type="PDBsum" id="3IFQ"/>
<dbReference type="SMR" id="P14923"/>
<dbReference type="BioGRID" id="109931">
    <property type="interactions" value="520"/>
</dbReference>
<dbReference type="CORUM" id="P14923"/>
<dbReference type="DIP" id="DIP-36235N"/>
<dbReference type="FunCoup" id="P14923">
    <property type="interactions" value="172"/>
</dbReference>
<dbReference type="IntAct" id="P14923">
    <property type="interactions" value="202"/>
</dbReference>
<dbReference type="MINT" id="P14923"/>
<dbReference type="STRING" id="9606.ENSP00000377508"/>
<dbReference type="DrugBank" id="DB01593">
    <property type="generic name" value="Zinc"/>
</dbReference>
<dbReference type="DrugBank" id="DB14487">
    <property type="generic name" value="Zinc acetate"/>
</dbReference>
<dbReference type="GlyConnect" id="1950">
    <property type="glycosylation" value="10 N-Linked glycans (4 sites)"/>
</dbReference>
<dbReference type="GlyCosmos" id="P14923">
    <property type="glycosylation" value="5 sites, 10 glycans"/>
</dbReference>
<dbReference type="GlyGen" id="P14923">
    <property type="glycosylation" value="7 sites, 11 N-linked glycans (4 sites), 1 O-linked glycan (2 sites)"/>
</dbReference>
<dbReference type="iPTMnet" id="P14923"/>
<dbReference type="MetOSite" id="P14923"/>
<dbReference type="PhosphoSitePlus" id="P14923"/>
<dbReference type="SwissPalm" id="P14923"/>
<dbReference type="BioMuta" id="JUP"/>
<dbReference type="DMDM" id="205371866"/>
<dbReference type="jPOST" id="P14923"/>
<dbReference type="MassIVE" id="P14923"/>
<dbReference type="PaxDb" id="9606-ENSP00000377508"/>
<dbReference type="PeptideAtlas" id="P14923"/>
<dbReference type="PRIDE" id="P14923"/>
<dbReference type="ProteomicsDB" id="53098"/>
<dbReference type="Antibodypedia" id="80391">
    <property type="antibodies" value="1299 antibodies from 45 providers"/>
</dbReference>
<dbReference type="DNASU" id="3728"/>
<dbReference type="Ensembl" id="ENST00000310706.9">
    <property type="protein sequence ID" value="ENSP00000311113.5"/>
    <property type="gene ID" value="ENSG00000173801.17"/>
</dbReference>
<dbReference type="Ensembl" id="ENST00000393930.5">
    <property type="protein sequence ID" value="ENSP00000377507.1"/>
    <property type="gene ID" value="ENSG00000173801.17"/>
</dbReference>
<dbReference type="Ensembl" id="ENST00000393931.8">
    <property type="protein sequence ID" value="ENSP00000377508.3"/>
    <property type="gene ID" value="ENSG00000173801.17"/>
</dbReference>
<dbReference type="GeneID" id="3728"/>
<dbReference type="KEGG" id="hsa:3728"/>
<dbReference type="MANE-Select" id="ENST00000393931.8">
    <property type="protein sequence ID" value="ENSP00000377508.3"/>
    <property type="RefSeq nucleotide sequence ID" value="NM_002230.4"/>
    <property type="RefSeq protein sequence ID" value="NP_002221.1"/>
</dbReference>
<dbReference type="UCSC" id="uc002hxq.3">
    <property type="organism name" value="human"/>
</dbReference>
<dbReference type="AGR" id="HGNC:6207"/>
<dbReference type="CTD" id="3728"/>
<dbReference type="DisGeNET" id="3728"/>
<dbReference type="GeneCards" id="JUP"/>
<dbReference type="GeneReviews" id="JUP"/>
<dbReference type="HGNC" id="HGNC:6207">
    <property type="gene designation" value="JUP"/>
</dbReference>
<dbReference type="HPA" id="ENSG00000173801">
    <property type="expression patterns" value="Tissue enhanced (esophagus, skin)"/>
</dbReference>
<dbReference type="MalaCards" id="JUP"/>
<dbReference type="MIM" id="173325">
    <property type="type" value="gene"/>
</dbReference>
<dbReference type="MIM" id="601214">
    <property type="type" value="phenotype"/>
</dbReference>
<dbReference type="MIM" id="611528">
    <property type="type" value="phenotype"/>
</dbReference>
<dbReference type="neXtProt" id="NX_P14923"/>
<dbReference type="OpenTargets" id="ENSG00000173801"/>
<dbReference type="Orphanet" id="293888">
    <property type="disease" value="Inherited isolated arrhythmogenic cardiomyopathy, dominant-left variant"/>
</dbReference>
<dbReference type="Orphanet" id="293910">
    <property type="disease" value="Inherited isolated arrhythmogenic cardiomyopathy, dominant-right variant"/>
</dbReference>
<dbReference type="Orphanet" id="293899">
    <property type="disease" value="Inherited isolated arrhythmogenic ventricular dysplasia, biventricular variant"/>
</dbReference>
<dbReference type="Orphanet" id="158687">
    <property type="disease" value="Lethal acantholytic erosive disorder"/>
</dbReference>
<dbReference type="Orphanet" id="34217">
    <property type="disease" value="Naxos disease"/>
</dbReference>
<dbReference type="PharmGKB" id="PA30009"/>
<dbReference type="VEuPathDB" id="HostDB:ENSG00000173801"/>
<dbReference type="eggNOG" id="KOG4203">
    <property type="taxonomic scope" value="Eukaryota"/>
</dbReference>
<dbReference type="GeneTree" id="ENSGT00940000156395"/>
<dbReference type="HOGENOM" id="CLU_008757_1_1_1"/>
<dbReference type="InParanoid" id="P14923"/>
<dbReference type="OMA" id="DETCGRQ"/>
<dbReference type="OrthoDB" id="195736at2759"/>
<dbReference type="PAN-GO" id="P14923">
    <property type="GO annotations" value="12 GO annotations based on evolutionary models"/>
</dbReference>
<dbReference type="PhylomeDB" id="P14923"/>
<dbReference type="TreeFam" id="TF317997"/>
<dbReference type="PathwayCommons" id="P14923"/>
<dbReference type="Reactome" id="R-HSA-418990">
    <property type="pathway name" value="Adherens junctions interactions"/>
</dbReference>
<dbReference type="Reactome" id="R-HSA-5218920">
    <property type="pathway name" value="VEGFR2 mediated vascular permeability"/>
</dbReference>
<dbReference type="Reactome" id="R-HSA-6798695">
    <property type="pathway name" value="Neutrophil degranulation"/>
</dbReference>
<dbReference type="Reactome" id="R-HSA-6805567">
    <property type="pathway name" value="Keratinization"/>
</dbReference>
<dbReference type="Reactome" id="R-HSA-6809371">
    <property type="pathway name" value="Formation of the cornified envelope"/>
</dbReference>
<dbReference type="Reactome" id="R-HSA-8980692">
    <property type="pathway name" value="RHOA GTPase cycle"/>
</dbReference>
<dbReference type="Reactome" id="R-HSA-9013026">
    <property type="pathway name" value="RHOB GTPase cycle"/>
</dbReference>
<dbReference type="Reactome" id="R-HSA-9013106">
    <property type="pathway name" value="RHOC GTPase cycle"/>
</dbReference>
<dbReference type="Reactome" id="R-HSA-9013148">
    <property type="pathway name" value="CDC42 GTPase cycle"/>
</dbReference>
<dbReference type="Reactome" id="R-HSA-9013406">
    <property type="pathway name" value="RHOQ GTPase cycle"/>
</dbReference>
<dbReference type="Reactome" id="R-HSA-9013407">
    <property type="pathway name" value="RHOH GTPase cycle"/>
</dbReference>
<dbReference type="Reactome" id="R-HSA-9013409">
    <property type="pathway name" value="RHOJ GTPase cycle"/>
</dbReference>
<dbReference type="Reactome" id="R-HSA-9762292">
    <property type="pathway name" value="Regulation of CDH11 function"/>
</dbReference>
<dbReference type="Reactome" id="R-HSA-9764302">
    <property type="pathway name" value="Regulation of CDH19 Expression and Function"/>
</dbReference>
<dbReference type="Reactome" id="R-HSA-9833576">
    <property type="pathway name" value="CDH11 homotypic and heterotypic interactions"/>
</dbReference>
<dbReference type="SignaLink" id="P14923"/>
<dbReference type="SIGNOR" id="P14923"/>
<dbReference type="BioGRID-ORCS" id="3728">
    <property type="hits" value="21 hits in 1167 CRISPR screens"/>
</dbReference>
<dbReference type="CD-CODE" id="FB4E32DD">
    <property type="entry name" value="Presynaptic clusters and postsynaptic densities"/>
</dbReference>
<dbReference type="ChiTaRS" id="JUP">
    <property type="organism name" value="human"/>
</dbReference>
<dbReference type="EvolutionaryTrace" id="P14923"/>
<dbReference type="GeneWiki" id="Plakoglobin"/>
<dbReference type="GenomeRNAi" id="3728"/>
<dbReference type="Pharos" id="P14923">
    <property type="development level" value="Tbio"/>
</dbReference>
<dbReference type="PRO" id="PR:P14923"/>
<dbReference type="Proteomes" id="UP000005640">
    <property type="component" value="Chromosome 17"/>
</dbReference>
<dbReference type="RNAct" id="P14923">
    <property type="molecule type" value="protein"/>
</dbReference>
<dbReference type="Bgee" id="ENSG00000173801">
    <property type="expression patterns" value="Expressed in lower esophagus mucosa and 202 other cell types or tissues"/>
</dbReference>
<dbReference type="ExpressionAtlas" id="P14923">
    <property type="expression patterns" value="baseline and differential"/>
</dbReference>
<dbReference type="GO" id="GO:0005912">
    <property type="term" value="C:adherens junction"/>
    <property type="evidence" value="ECO:0000314"/>
    <property type="project" value="UniProtKB"/>
</dbReference>
<dbReference type="GO" id="GO:0016342">
    <property type="term" value="C:catenin complex"/>
    <property type="evidence" value="ECO:0000314"/>
    <property type="project" value="BHF-UCL"/>
</dbReference>
<dbReference type="GO" id="GO:0005911">
    <property type="term" value="C:cell-cell junction"/>
    <property type="evidence" value="ECO:0000314"/>
    <property type="project" value="UniProtKB"/>
</dbReference>
<dbReference type="GO" id="GO:0001533">
    <property type="term" value="C:cornified envelope"/>
    <property type="evidence" value="ECO:0000304"/>
    <property type="project" value="Reactome"/>
</dbReference>
<dbReference type="GO" id="GO:0005737">
    <property type="term" value="C:cytoplasm"/>
    <property type="evidence" value="ECO:0000315"/>
    <property type="project" value="BHF-UCL"/>
</dbReference>
<dbReference type="GO" id="GO:0009898">
    <property type="term" value="C:cytoplasmic side of plasma membrane"/>
    <property type="evidence" value="ECO:0000250"/>
    <property type="project" value="BHF-UCL"/>
</dbReference>
<dbReference type="GO" id="GO:0005856">
    <property type="term" value="C:cytoskeleton"/>
    <property type="evidence" value="ECO:0000250"/>
    <property type="project" value="BHF-UCL"/>
</dbReference>
<dbReference type="GO" id="GO:0005829">
    <property type="term" value="C:cytosol"/>
    <property type="evidence" value="ECO:0000250"/>
    <property type="project" value="BHF-UCL"/>
</dbReference>
<dbReference type="GO" id="GO:0030057">
    <property type="term" value="C:desmosome"/>
    <property type="evidence" value="ECO:0000314"/>
    <property type="project" value="UniProtKB"/>
</dbReference>
<dbReference type="GO" id="GO:0070062">
    <property type="term" value="C:extracellular exosome"/>
    <property type="evidence" value="ECO:0007005"/>
    <property type="project" value="UniProtKB"/>
</dbReference>
<dbReference type="GO" id="GO:0005576">
    <property type="term" value="C:extracellular region"/>
    <property type="evidence" value="ECO:0000304"/>
    <property type="project" value="Reactome"/>
</dbReference>
<dbReference type="GO" id="GO:1904813">
    <property type="term" value="C:ficolin-1-rich granule lumen"/>
    <property type="evidence" value="ECO:0000304"/>
    <property type="project" value="Reactome"/>
</dbReference>
<dbReference type="GO" id="GO:0005925">
    <property type="term" value="C:focal adhesion"/>
    <property type="evidence" value="ECO:0007005"/>
    <property type="project" value="UniProtKB"/>
</dbReference>
<dbReference type="GO" id="GO:0071665">
    <property type="term" value="C:gamma-catenin-TCF7L2 complex"/>
    <property type="evidence" value="ECO:0000314"/>
    <property type="project" value="BHF-UCL"/>
</dbReference>
<dbReference type="GO" id="GO:0014704">
    <property type="term" value="C:intercalated disc"/>
    <property type="evidence" value="ECO:0000314"/>
    <property type="project" value="BHF-UCL"/>
</dbReference>
<dbReference type="GO" id="GO:0005882">
    <property type="term" value="C:intermediate filament"/>
    <property type="evidence" value="ECO:0007669"/>
    <property type="project" value="Ensembl"/>
</dbReference>
<dbReference type="GO" id="GO:0005634">
    <property type="term" value="C:nucleus"/>
    <property type="evidence" value="ECO:0000315"/>
    <property type="project" value="BHF-UCL"/>
</dbReference>
<dbReference type="GO" id="GO:0005886">
    <property type="term" value="C:plasma membrane"/>
    <property type="evidence" value="ECO:0000314"/>
    <property type="project" value="UniProtKB"/>
</dbReference>
<dbReference type="GO" id="GO:0032993">
    <property type="term" value="C:protein-DNA complex"/>
    <property type="evidence" value="ECO:0000314"/>
    <property type="project" value="BHF-UCL"/>
</dbReference>
<dbReference type="GO" id="GO:0035580">
    <property type="term" value="C:specific granule lumen"/>
    <property type="evidence" value="ECO:0000304"/>
    <property type="project" value="Reactome"/>
</dbReference>
<dbReference type="GO" id="GO:0030018">
    <property type="term" value="C:Z disc"/>
    <property type="evidence" value="ECO:0007669"/>
    <property type="project" value="Ensembl"/>
</dbReference>
<dbReference type="GO" id="GO:0005915">
    <property type="term" value="C:zonula adherens"/>
    <property type="evidence" value="ECO:0000250"/>
    <property type="project" value="BHF-UCL"/>
</dbReference>
<dbReference type="GO" id="GO:0045294">
    <property type="term" value="F:alpha-catenin binding"/>
    <property type="evidence" value="ECO:0000353"/>
    <property type="project" value="BHF-UCL"/>
</dbReference>
<dbReference type="GO" id="GO:0045296">
    <property type="term" value="F:cadherin binding"/>
    <property type="evidence" value="ECO:0000353"/>
    <property type="project" value="BHF-UCL"/>
</dbReference>
<dbReference type="GO" id="GO:0050839">
    <property type="term" value="F:cell adhesion molecule binding"/>
    <property type="evidence" value="ECO:0000353"/>
    <property type="project" value="BHF-UCL"/>
</dbReference>
<dbReference type="GO" id="GO:0086083">
    <property type="term" value="F:cell adhesive protein binding involved in bundle of His cell-Purkinje myocyte communication"/>
    <property type="evidence" value="ECO:0000305"/>
    <property type="project" value="BHF-UCL"/>
</dbReference>
<dbReference type="GO" id="GO:0106006">
    <property type="term" value="F:cytoskeletal protein-membrane anchor activity"/>
    <property type="evidence" value="ECO:0000314"/>
    <property type="project" value="BHF-UCL"/>
</dbReference>
<dbReference type="GO" id="GO:0016922">
    <property type="term" value="F:nuclear receptor binding"/>
    <property type="evidence" value="ECO:0000318"/>
    <property type="project" value="GO_Central"/>
</dbReference>
<dbReference type="GO" id="GO:0042803">
    <property type="term" value="F:protein homodimerization activity"/>
    <property type="evidence" value="ECO:0000250"/>
    <property type="project" value="BHF-UCL"/>
</dbReference>
<dbReference type="GO" id="GO:0019903">
    <property type="term" value="F:protein phosphatase binding"/>
    <property type="evidence" value="ECO:0000353"/>
    <property type="project" value="UniProtKB"/>
</dbReference>
<dbReference type="GO" id="GO:0005198">
    <property type="term" value="F:structural molecule activity"/>
    <property type="evidence" value="ECO:0000303"/>
    <property type="project" value="BHF-UCL"/>
</dbReference>
<dbReference type="GO" id="GO:0003713">
    <property type="term" value="F:transcription coactivator activity"/>
    <property type="evidence" value="ECO:0000314"/>
    <property type="project" value="BHF-UCL"/>
</dbReference>
<dbReference type="GO" id="GO:0086073">
    <property type="term" value="P:bundle of His cell-Purkinje myocyte adhesion involved in cell communication"/>
    <property type="evidence" value="ECO:0000315"/>
    <property type="project" value="BHF-UCL"/>
</dbReference>
<dbReference type="GO" id="GO:0060070">
    <property type="term" value="P:canonical Wnt signaling pathway"/>
    <property type="evidence" value="ECO:0000318"/>
    <property type="project" value="GO_Central"/>
</dbReference>
<dbReference type="GO" id="GO:0016477">
    <property type="term" value="P:cell migration"/>
    <property type="evidence" value="ECO:0000315"/>
    <property type="project" value="BHF-UCL"/>
</dbReference>
<dbReference type="GO" id="GO:0098609">
    <property type="term" value="P:cell-cell adhesion"/>
    <property type="evidence" value="ECO:0000314"/>
    <property type="project" value="BHF-UCL"/>
</dbReference>
<dbReference type="GO" id="GO:0071681">
    <property type="term" value="P:cellular response to indole-3-methanol"/>
    <property type="evidence" value="ECO:0000314"/>
    <property type="project" value="UniProtKB"/>
</dbReference>
<dbReference type="GO" id="GO:0002159">
    <property type="term" value="P:desmosome assembly"/>
    <property type="evidence" value="ECO:0000314"/>
    <property type="project" value="BHF-UCL"/>
</dbReference>
<dbReference type="GO" id="GO:0050982">
    <property type="term" value="P:detection of mechanical stimulus"/>
    <property type="evidence" value="ECO:0000314"/>
    <property type="project" value="BHF-UCL"/>
</dbReference>
<dbReference type="GO" id="GO:0071603">
    <property type="term" value="P:endothelial cell-cell adhesion"/>
    <property type="evidence" value="ECO:0000250"/>
    <property type="project" value="BHF-UCL"/>
</dbReference>
<dbReference type="GO" id="GO:0043537">
    <property type="term" value="P:negative regulation of blood vessel endothelial cell migration"/>
    <property type="evidence" value="ECO:0000316"/>
    <property type="project" value="BHF-UCL"/>
</dbReference>
<dbReference type="GO" id="GO:0045766">
    <property type="term" value="P:positive regulation of angiogenesis"/>
    <property type="evidence" value="ECO:0000316"/>
    <property type="project" value="BHF-UCL"/>
</dbReference>
<dbReference type="GO" id="GO:0090263">
    <property type="term" value="P:positive regulation of canonical Wnt signaling pathway"/>
    <property type="evidence" value="ECO:0000305"/>
    <property type="project" value="BHF-UCL"/>
</dbReference>
<dbReference type="GO" id="GO:0001954">
    <property type="term" value="P:positive regulation of cell-matrix adhesion"/>
    <property type="evidence" value="ECO:0000316"/>
    <property type="project" value="BHF-UCL"/>
</dbReference>
<dbReference type="GO" id="GO:0042307">
    <property type="term" value="P:positive regulation of protein import into nucleus"/>
    <property type="evidence" value="ECO:0000314"/>
    <property type="project" value="BHF-UCL"/>
</dbReference>
<dbReference type="GO" id="GO:0045944">
    <property type="term" value="P:positive regulation of transcription by RNA polymerase II"/>
    <property type="evidence" value="ECO:0000314"/>
    <property type="project" value="BHF-UCL"/>
</dbReference>
<dbReference type="GO" id="GO:0072659">
    <property type="term" value="P:protein localization to plasma membrane"/>
    <property type="evidence" value="ECO:0000315"/>
    <property type="project" value="UniProtKB"/>
</dbReference>
<dbReference type="GO" id="GO:0042127">
    <property type="term" value="P:regulation of cell population proliferation"/>
    <property type="evidence" value="ECO:0000314"/>
    <property type="project" value="BHF-UCL"/>
</dbReference>
<dbReference type="GO" id="GO:0086091">
    <property type="term" value="P:regulation of heart rate by cardiac conduction"/>
    <property type="evidence" value="ECO:0000315"/>
    <property type="project" value="BHF-UCL"/>
</dbReference>
<dbReference type="GO" id="GO:0098911">
    <property type="term" value="P:regulation of ventricular cardiac muscle cell action potential"/>
    <property type="evidence" value="ECO:0000315"/>
    <property type="project" value="BHF-UCL"/>
</dbReference>
<dbReference type="GO" id="GO:0043588">
    <property type="term" value="P:skin development"/>
    <property type="evidence" value="ECO:0007669"/>
    <property type="project" value="Ensembl"/>
</dbReference>
<dbReference type="FunFam" id="1.25.10.10:FF:000015">
    <property type="entry name" value="Catenin beta-1"/>
    <property type="match status" value="1"/>
</dbReference>
<dbReference type="Gene3D" id="1.25.10.10">
    <property type="entry name" value="Leucine-rich Repeat Variant"/>
    <property type="match status" value="1"/>
</dbReference>
<dbReference type="IDEAL" id="IID00298"/>
<dbReference type="InterPro" id="IPR011989">
    <property type="entry name" value="ARM-like"/>
</dbReference>
<dbReference type="InterPro" id="IPR016024">
    <property type="entry name" value="ARM-type_fold"/>
</dbReference>
<dbReference type="InterPro" id="IPR000225">
    <property type="entry name" value="Armadillo"/>
</dbReference>
<dbReference type="InterPro" id="IPR013284">
    <property type="entry name" value="Beta-catenin"/>
</dbReference>
<dbReference type="PANTHER" id="PTHR45976">
    <property type="entry name" value="ARMADILLO SEGMENT POLARITY PROTEIN"/>
    <property type="match status" value="1"/>
</dbReference>
<dbReference type="Pfam" id="PF00514">
    <property type="entry name" value="Arm"/>
    <property type="match status" value="3"/>
</dbReference>
<dbReference type="PRINTS" id="PR01869">
    <property type="entry name" value="BCATNINFAMLY"/>
</dbReference>
<dbReference type="SMART" id="SM00185">
    <property type="entry name" value="ARM"/>
    <property type="match status" value="12"/>
</dbReference>
<dbReference type="SUPFAM" id="SSF48371">
    <property type="entry name" value="ARM repeat"/>
    <property type="match status" value="1"/>
</dbReference>
<dbReference type="PROSITE" id="PS50176">
    <property type="entry name" value="ARM_REPEAT"/>
    <property type="match status" value="9"/>
</dbReference>
<proteinExistence type="evidence at protein level"/>
<accession>P14923</accession>
<accession>Q15093</accession>
<accession>Q15151</accession>
<accession>Q7L3S5</accession>
<accession>Q86W21</accession>
<accession>Q9BWC4</accession>
<accession>Q9HCX9</accession>
<evidence type="ECO:0000250" key="1"/>
<evidence type="ECO:0000250" key="2">
    <source>
        <dbReference type="UniProtKB" id="Q9PVF7"/>
    </source>
</evidence>
<evidence type="ECO:0000269" key="3">
    <source>
    </source>
</evidence>
<evidence type="ECO:0000269" key="4">
    <source>
    </source>
</evidence>
<evidence type="ECO:0000269" key="5">
    <source>
    </source>
</evidence>
<evidence type="ECO:0000269" key="6">
    <source>
    </source>
</evidence>
<evidence type="ECO:0000269" key="7">
    <source>
    </source>
</evidence>
<evidence type="ECO:0000269" key="8">
    <source>
    </source>
</evidence>
<evidence type="ECO:0000269" key="9">
    <source>
    </source>
</evidence>
<evidence type="ECO:0000269" key="10">
    <source>
    </source>
</evidence>
<evidence type="ECO:0000269" key="11">
    <source>
    </source>
</evidence>
<evidence type="ECO:0000269" key="12">
    <source>
    </source>
</evidence>
<evidence type="ECO:0000269" key="13">
    <source>
    </source>
</evidence>
<evidence type="ECO:0000269" key="14">
    <source>
    </source>
</evidence>
<evidence type="ECO:0000269" key="15">
    <source>
    </source>
</evidence>
<evidence type="ECO:0000269" key="16">
    <source>
    </source>
</evidence>
<evidence type="ECO:0000269" key="17">
    <source>
    </source>
</evidence>
<evidence type="ECO:0000269" key="18">
    <source>
    </source>
</evidence>
<evidence type="ECO:0000269" key="19">
    <source>
    </source>
</evidence>
<evidence type="ECO:0000269" key="20">
    <source>
    </source>
</evidence>
<evidence type="ECO:0000269" key="21">
    <source>
    </source>
</evidence>
<evidence type="ECO:0000269" key="22">
    <source>
    </source>
</evidence>
<evidence type="ECO:0000269" key="23">
    <source ref="4"/>
</evidence>
<evidence type="ECO:0000269" key="24">
    <source ref="6"/>
</evidence>
<evidence type="ECO:0000269" key="25">
    <source ref="8"/>
</evidence>
<evidence type="ECO:0000305" key="26"/>
<evidence type="ECO:0000312" key="27">
    <source>
        <dbReference type="HGNC" id="HGNC:6207"/>
    </source>
</evidence>
<evidence type="ECO:0007744" key="28">
    <source>
    </source>
</evidence>
<evidence type="ECO:0007744" key="29">
    <source>
    </source>
</evidence>
<evidence type="ECO:0007744" key="30">
    <source>
    </source>
</evidence>
<evidence type="ECO:0007744" key="31">
    <source>
    </source>
</evidence>
<evidence type="ECO:0007829" key="32">
    <source>
        <dbReference type="PDB" id="3IFQ"/>
    </source>
</evidence>
<keyword id="KW-0002">3D-structure</keyword>
<keyword id="KW-0007">Acetylation</keyword>
<keyword id="KW-0122">Cardiomyopathy</keyword>
<keyword id="KW-0130">Cell adhesion</keyword>
<keyword id="KW-0965">Cell junction</keyword>
<keyword id="KW-1003">Cell membrane</keyword>
<keyword id="KW-0963">Cytoplasm</keyword>
<keyword id="KW-0206">Cytoskeleton</keyword>
<keyword id="KW-0903">Direct protein sequencing</keyword>
<keyword id="KW-0225">Disease variant</keyword>
<keyword id="KW-0325">Glycoprotein</keyword>
<keyword id="KW-0472">Membrane</keyword>
<keyword id="KW-0539">Nucleus</keyword>
<keyword id="KW-1007">Palmoplantar keratoderma</keyword>
<keyword id="KW-0597">Phosphoprotein</keyword>
<keyword id="KW-1267">Proteomics identification</keyword>
<keyword id="KW-1185">Reference proteome</keyword>
<keyword id="KW-0677">Repeat</keyword>